<keyword id="KW-0067">ATP-binding</keyword>
<keyword id="KW-0963">Cytoplasm</keyword>
<keyword id="KW-0237">DNA synthesis</keyword>
<keyword id="KW-0418">Kinase</keyword>
<keyword id="KW-0479">Metal-binding</keyword>
<keyword id="KW-0547">Nucleotide-binding</keyword>
<keyword id="KW-0808">Transferase</keyword>
<keyword id="KW-0862">Zinc</keyword>
<dbReference type="EC" id="2.7.1.21" evidence="1"/>
<dbReference type="EMBL" id="CP000001">
    <property type="protein sequence ID" value="AAU15251.1"/>
    <property type="molecule type" value="Genomic_DNA"/>
</dbReference>
<dbReference type="RefSeq" id="WP_000280867.1">
    <property type="nucleotide sequence ID" value="NZ_CP009968.1"/>
</dbReference>
<dbReference type="SMR" id="Q630R8"/>
<dbReference type="KEGG" id="bcz:BCE33L5030"/>
<dbReference type="PATRIC" id="fig|288681.22.peg.314"/>
<dbReference type="Proteomes" id="UP000002612">
    <property type="component" value="Chromosome"/>
</dbReference>
<dbReference type="GO" id="GO:0005829">
    <property type="term" value="C:cytosol"/>
    <property type="evidence" value="ECO:0007669"/>
    <property type="project" value="TreeGrafter"/>
</dbReference>
<dbReference type="GO" id="GO:0005524">
    <property type="term" value="F:ATP binding"/>
    <property type="evidence" value="ECO:0007669"/>
    <property type="project" value="UniProtKB-UniRule"/>
</dbReference>
<dbReference type="GO" id="GO:0004797">
    <property type="term" value="F:thymidine kinase activity"/>
    <property type="evidence" value="ECO:0007669"/>
    <property type="project" value="UniProtKB-UniRule"/>
</dbReference>
<dbReference type="GO" id="GO:0008270">
    <property type="term" value="F:zinc ion binding"/>
    <property type="evidence" value="ECO:0007669"/>
    <property type="project" value="UniProtKB-UniRule"/>
</dbReference>
<dbReference type="GO" id="GO:0071897">
    <property type="term" value="P:DNA biosynthetic process"/>
    <property type="evidence" value="ECO:0007669"/>
    <property type="project" value="UniProtKB-KW"/>
</dbReference>
<dbReference type="GO" id="GO:0046104">
    <property type="term" value="P:thymidine metabolic process"/>
    <property type="evidence" value="ECO:0007669"/>
    <property type="project" value="TreeGrafter"/>
</dbReference>
<dbReference type="FunFam" id="3.30.60.20:FF:000026">
    <property type="entry name" value="Thymidine kinase"/>
    <property type="match status" value="1"/>
</dbReference>
<dbReference type="FunFam" id="3.40.50.300:FF:000384">
    <property type="entry name" value="Thymidine kinase"/>
    <property type="match status" value="1"/>
</dbReference>
<dbReference type="Gene3D" id="3.30.60.20">
    <property type="match status" value="1"/>
</dbReference>
<dbReference type="Gene3D" id="3.40.50.300">
    <property type="entry name" value="P-loop containing nucleotide triphosphate hydrolases"/>
    <property type="match status" value="1"/>
</dbReference>
<dbReference type="HAMAP" id="MF_00124">
    <property type="entry name" value="Thymidine_kinase"/>
    <property type="match status" value="1"/>
</dbReference>
<dbReference type="InterPro" id="IPR027417">
    <property type="entry name" value="P-loop_NTPase"/>
</dbReference>
<dbReference type="InterPro" id="IPR001267">
    <property type="entry name" value="Thymidine_kinase"/>
</dbReference>
<dbReference type="InterPro" id="IPR020633">
    <property type="entry name" value="Thymidine_kinase_CS"/>
</dbReference>
<dbReference type="NCBIfam" id="NF003296">
    <property type="entry name" value="PRK04296.1-1"/>
    <property type="match status" value="1"/>
</dbReference>
<dbReference type="PANTHER" id="PTHR11441">
    <property type="entry name" value="THYMIDINE KINASE"/>
    <property type="match status" value="1"/>
</dbReference>
<dbReference type="PANTHER" id="PTHR11441:SF0">
    <property type="entry name" value="THYMIDINE KINASE, CYTOSOLIC"/>
    <property type="match status" value="1"/>
</dbReference>
<dbReference type="Pfam" id="PF00265">
    <property type="entry name" value="TK"/>
    <property type="match status" value="1"/>
</dbReference>
<dbReference type="PIRSF" id="PIRSF035805">
    <property type="entry name" value="TK_cell"/>
    <property type="match status" value="1"/>
</dbReference>
<dbReference type="SUPFAM" id="SSF57716">
    <property type="entry name" value="Glucocorticoid receptor-like (DNA-binding domain)"/>
    <property type="match status" value="1"/>
</dbReference>
<dbReference type="SUPFAM" id="SSF52540">
    <property type="entry name" value="P-loop containing nucleoside triphosphate hydrolases"/>
    <property type="match status" value="1"/>
</dbReference>
<dbReference type="PROSITE" id="PS00603">
    <property type="entry name" value="TK_CELLULAR_TYPE"/>
    <property type="match status" value="1"/>
</dbReference>
<accession>Q630R8</accession>
<gene>
    <name evidence="1" type="primary">tdk</name>
    <name type="ordered locus">BCE33L5030</name>
</gene>
<reference key="1">
    <citation type="journal article" date="2006" name="J. Bacteriol.">
        <title>Pathogenomic sequence analysis of Bacillus cereus and Bacillus thuringiensis isolates closely related to Bacillus anthracis.</title>
        <authorList>
            <person name="Han C.S."/>
            <person name="Xie G."/>
            <person name="Challacombe J.F."/>
            <person name="Altherr M.R."/>
            <person name="Bhotika S.S."/>
            <person name="Bruce D."/>
            <person name="Campbell C.S."/>
            <person name="Campbell M.L."/>
            <person name="Chen J."/>
            <person name="Chertkov O."/>
            <person name="Cleland C."/>
            <person name="Dimitrijevic M."/>
            <person name="Doggett N.A."/>
            <person name="Fawcett J.J."/>
            <person name="Glavina T."/>
            <person name="Goodwin L.A."/>
            <person name="Hill K.K."/>
            <person name="Hitchcock P."/>
            <person name="Jackson P.J."/>
            <person name="Keim P."/>
            <person name="Kewalramani A.R."/>
            <person name="Longmire J."/>
            <person name="Lucas S."/>
            <person name="Malfatti S."/>
            <person name="McMurry K."/>
            <person name="Meincke L.J."/>
            <person name="Misra M."/>
            <person name="Moseman B.L."/>
            <person name="Mundt M."/>
            <person name="Munk A.C."/>
            <person name="Okinaka R.T."/>
            <person name="Parson-Quintana B."/>
            <person name="Reilly L.P."/>
            <person name="Richardson P."/>
            <person name="Robinson D.L."/>
            <person name="Rubin E."/>
            <person name="Saunders E."/>
            <person name="Tapia R."/>
            <person name="Tesmer J.G."/>
            <person name="Thayer N."/>
            <person name="Thompson L.S."/>
            <person name="Tice H."/>
            <person name="Ticknor L.O."/>
            <person name="Wills P.L."/>
            <person name="Brettin T.S."/>
            <person name="Gilna P."/>
        </authorList>
    </citation>
    <scope>NUCLEOTIDE SEQUENCE [LARGE SCALE GENOMIC DNA]</scope>
    <source>
        <strain>ZK / E33L</strain>
    </source>
</reference>
<proteinExistence type="inferred from homology"/>
<name>KITH_BACCZ</name>
<sequence length="195" mass="21715">MYLINQNGWIEVICGSMFSGKSEELIRRVRRTQFAKQHAIVFKPCIDNRYSEEDVVSHNGLKVKAVPVSASKDIFKHITEEMDVIAIDEVQFFDGDIVEVVQVLANRGYRVIVAGLDQDFRGLPFGQVPQLMAIAEHVTKLQAVCSACGSPASRTQRLIDGEPAAFDDPIILVGASESYEPRCRHCHAVPTNKDK</sequence>
<comment type="catalytic activity">
    <reaction evidence="1">
        <text>thymidine + ATP = dTMP + ADP + H(+)</text>
        <dbReference type="Rhea" id="RHEA:19129"/>
        <dbReference type="ChEBI" id="CHEBI:15378"/>
        <dbReference type="ChEBI" id="CHEBI:17748"/>
        <dbReference type="ChEBI" id="CHEBI:30616"/>
        <dbReference type="ChEBI" id="CHEBI:63528"/>
        <dbReference type="ChEBI" id="CHEBI:456216"/>
        <dbReference type="EC" id="2.7.1.21"/>
    </reaction>
</comment>
<comment type="subunit">
    <text evidence="1">Homotetramer.</text>
</comment>
<comment type="subcellular location">
    <subcellularLocation>
        <location evidence="1">Cytoplasm</location>
    </subcellularLocation>
</comment>
<comment type="similarity">
    <text evidence="1">Belongs to the thymidine kinase family.</text>
</comment>
<feature type="chain" id="PRO_0000174956" description="Thymidine kinase">
    <location>
        <begin position="1"/>
        <end position="195"/>
    </location>
</feature>
<feature type="active site" description="Proton acceptor" evidence="1">
    <location>
        <position position="89"/>
    </location>
</feature>
<feature type="binding site" evidence="1">
    <location>
        <begin position="15"/>
        <end position="22"/>
    </location>
    <ligand>
        <name>ATP</name>
        <dbReference type="ChEBI" id="CHEBI:30616"/>
    </ligand>
</feature>
<feature type="binding site" evidence="1">
    <location>
        <begin position="88"/>
        <end position="91"/>
    </location>
    <ligand>
        <name>ATP</name>
        <dbReference type="ChEBI" id="CHEBI:30616"/>
    </ligand>
</feature>
<feature type="binding site" evidence="1">
    <location>
        <position position="145"/>
    </location>
    <ligand>
        <name>Zn(2+)</name>
        <dbReference type="ChEBI" id="CHEBI:29105"/>
    </ligand>
</feature>
<feature type="binding site" evidence="1">
    <location>
        <position position="148"/>
    </location>
    <ligand>
        <name>Zn(2+)</name>
        <dbReference type="ChEBI" id="CHEBI:29105"/>
    </ligand>
</feature>
<feature type="binding site" evidence="1">
    <location>
        <position position="183"/>
    </location>
    <ligand>
        <name>Zn(2+)</name>
        <dbReference type="ChEBI" id="CHEBI:29105"/>
    </ligand>
</feature>
<feature type="binding site" evidence="1">
    <location>
        <position position="186"/>
    </location>
    <ligand>
        <name>Zn(2+)</name>
        <dbReference type="ChEBI" id="CHEBI:29105"/>
    </ligand>
</feature>
<organism>
    <name type="scientific">Bacillus cereus (strain ZK / E33L)</name>
    <dbReference type="NCBI Taxonomy" id="288681"/>
    <lineage>
        <taxon>Bacteria</taxon>
        <taxon>Bacillati</taxon>
        <taxon>Bacillota</taxon>
        <taxon>Bacilli</taxon>
        <taxon>Bacillales</taxon>
        <taxon>Bacillaceae</taxon>
        <taxon>Bacillus</taxon>
        <taxon>Bacillus cereus group</taxon>
    </lineage>
</organism>
<protein>
    <recommendedName>
        <fullName evidence="1">Thymidine kinase</fullName>
        <ecNumber evidence="1">2.7.1.21</ecNumber>
    </recommendedName>
</protein>
<evidence type="ECO:0000255" key="1">
    <source>
        <dbReference type="HAMAP-Rule" id="MF_00124"/>
    </source>
</evidence>